<dbReference type="EMBL" id="BC080387">
    <property type="protein sequence ID" value="AAH80387.1"/>
    <property type="molecule type" value="mRNA"/>
</dbReference>
<dbReference type="RefSeq" id="NP_001087586.1">
    <property type="nucleotide sequence ID" value="NM_001094117.1"/>
</dbReference>
<dbReference type="DNASU" id="447410"/>
<dbReference type="GeneID" id="447410"/>
<dbReference type="KEGG" id="xla:447410"/>
<dbReference type="AGR" id="Xenbase:XB-GENE-865957"/>
<dbReference type="CTD" id="447410"/>
<dbReference type="Xenbase" id="XB-GENE-865957">
    <property type="gene designation" value="pnrc2.L"/>
</dbReference>
<dbReference type="OrthoDB" id="8732832at2759"/>
<dbReference type="Proteomes" id="UP000186698">
    <property type="component" value="Chromosome 2L"/>
</dbReference>
<dbReference type="Bgee" id="447410">
    <property type="expression patterns" value="Expressed in blastula and 19 other cell types or tissues"/>
</dbReference>
<dbReference type="GO" id="GO:0005634">
    <property type="term" value="C:nucleus"/>
    <property type="evidence" value="ECO:0000250"/>
    <property type="project" value="UniProtKB"/>
</dbReference>
<dbReference type="GO" id="GO:0000932">
    <property type="term" value="C:P-body"/>
    <property type="evidence" value="ECO:0000250"/>
    <property type="project" value="UniProtKB"/>
</dbReference>
<dbReference type="GO" id="GO:0000184">
    <property type="term" value="P:nuclear-transcribed mRNA catabolic process, nonsense-mediated decay"/>
    <property type="evidence" value="ECO:0000250"/>
    <property type="project" value="UniProtKB"/>
</dbReference>
<dbReference type="InterPro" id="IPR028322">
    <property type="entry name" value="PNRC-like_rgn"/>
</dbReference>
<dbReference type="InterPro" id="IPR026780">
    <property type="entry name" value="PNRC1/2"/>
</dbReference>
<dbReference type="PANTHER" id="PTHR15405">
    <property type="entry name" value="PROLINE-RICH NUCLEAR RECEPTOR COACTIVATOR"/>
    <property type="match status" value="1"/>
</dbReference>
<dbReference type="Pfam" id="PF15365">
    <property type="entry name" value="PNRC"/>
    <property type="match status" value="1"/>
</dbReference>
<sequence length="135" mass="15015">MGGGERFNIPGQHRNNLGKQINRQKLFDRNNQKMNTSHTKDRGRGCGTSLAWQAMQNGINNNAFSPNQNWSAGFPASKNLFTDEDNQNYAGAKFSEPPSPSVLPKPPSHWVLLSCSPAEKELMSFQLKTLLKVQA</sequence>
<comment type="function">
    <text evidence="1">Involved in nonsense-mediated mRNA decay (NMD) by acting as a bridge between the mRNA decapping complex and the NMD machinery. May act by targeting the NMD machinery to the P-body and recruiting the decapping machinery to aberrant mRNAs. Required for upf1/rent1 localization to the P-body. Also acts as a nuclear receptor coactivator (By similarity).</text>
</comment>
<comment type="subcellular location">
    <subcellularLocation>
        <location evidence="1">Nucleus</location>
    </subcellularLocation>
    <subcellularLocation>
        <location evidence="1">Cytoplasm</location>
        <location evidence="1">P-body</location>
    </subcellularLocation>
</comment>
<comment type="similarity">
    <text evidence="3">Belongs to the PNRC family. PNRC2 subfamily.</text>
</comment>
<protein>
    <recommendedName>
        <fullName>Proline-rich nuclear receptor coactivator 2 A</fullName>
    </recommendedName>
</protein>
<reference key="1">
    <citation type="submission" date="2004-08" db="EMBL/GenBank/DDBJ databases">
        <authorList>
            <consortium name="NIH - Xenopus Gene Collection (XGC) project"/>
        </authorList>
    </citation>
    <scope>NUCLEOTIDE SEQUENCE [LARGE SCALE MRNA]</scope>
    <source>
        <tissue>Kidney</tissue>
    </source>
</reference>
<name>PNC2A_XENLA</name>
<organism>
    <name type="scientific">Xenopus laevis</name>
    <name type="common">African clawed frog</name>
    <dbReference type="NCBI Taxonomy" id="8355"/>
    <lineage>
        <taxon>Eukaryota</taxon>
        <taxon>Metazoa</taxon>
        <taxon>Chordata</taxon>
        <taxon>Craniata</taxon>
        <taxon>Vertebrata</taxon>
        <taxon>Euteleostomi</taxon>
        <taxon>Amphibia</taxon>
        <taxon>Batrachia</taxon>
        <taxon>Anura</taxon>
        <taxon>Pipoidea</taxon>
        <taxon>Pipidae</taxon>
        <taxon>Xenopodinae</taxon>
        <taxon>Xenopus</taxon>
        <taxon>Xenopus</taxon>
    </lineage>
</organism>
<gene>
    <name type="primary">pnrc2-a</name>
</gene>
<evidence type="ECO:0000250" key="1"/>
<evidence type="ECO:0000256" key="2">
    <source>
        <dbReference type="SAM" id="MobiDB-lite"/>
    </source>
</evidence>
<evidence type="ECO:0000305" key="3"/>
<accession>Q66KH8</accession>
<keyword id="KW-0010">Activator</keyword>
<keyword id="KW-0963">Cytoplasm</keyword>
<keyword id="KW-0866">Nonsense-mediated mRNA decay</keyword>
<keyword id="KW-0539">Nucleus</keyword>
<keyword id="KW-1185">Reference proteome</keyword>
<keyword id="KW-0804">Transcription</keyword>
<keyword id="KW-0805">Transcription regulation</keyword>
<feature type="chain" id="PRO_0000377566" description="Proline-rich nuclear receptor coactivator 2 A">
    <location>
        <begin position="1"/>
        <end position="135"/>
    </location>
</feature>
<feature type="region of interest" description="Disordered" evidence="2">
    <location>
        <begin position="1"/>
        <end position="46"/>
    </location>
</feature>
<feature type="short sequence motif" description="SH3-binding">
    <location>
        <begin position="95"/>
        <end position="101"/>
    </location>
</feature>
<feature type="compositionally biased region" description="Polar residues" evidence="2">
    <location>
        <begin position="13"/>
        <end position="23"/>
    </location>
</feature>
<proteinExistence type="evidence at transcript level"/>